<reference key="1">
    <citation type="journal article" date="2005" name="Genome Biol.">
        <title>Full-length cDNAs from chicken bursal lymphocytes to facilitate gene function analysis.</title>
        <authorList>
            <person name="Caldwell R.B."/>
            <person name="Kierzek A.M."/>
            <person name="Arakawa H."/>
            <person name="Bezzubov Y."/>
            <person name="Zaim J."/>
            <person name="Fiedler P."/>
            <person name="Kutter S."/>
            <person name="Blagodatski A."/>
            <person name="Kostovska D."/>
            <person name="Koter M."/>
            <person name="Plachy J."/>
            <person name="Carninci P."/>
            <person name="Hayashizaki Y."/>
            <person name="Buerstedde J.-M."/>
        </authorList>
    </citation>
    <scope>NUCLEOTIDE SEQUENCE [LARGE SCALE MRNA]</scope>
    <source>
        <strain>CB</strain>
        <tissue>Bursa of Fabricius</tissue>
    </source>
</reference>
<keyword id="KW-0378">Hydrolase</keyword>
<keyword id="KW-0408">Iron</keyword>
<keyword id="KW-0464">Manganese</keyword>
<keyword id="KW-0479">Metal-binding</keyword>
<keyword id="KW-0507">mRNA processing</keyword>
<keyword id="KW-0539">Nucleus</keyword>
<keyword id="KW-1185">Reference proteome</keyword>
<keyword id="KW-0862">Zinc</keyword>
<sequence length="536" mass="60777">MKVAVAGCCHGALDKMYETLELLQRRHNVRPDLLLCCGDFQAVRNEADLRCMAVPAKYRHMQTFYRYYSGEKKAPVLTVFIGGNHEASNHLQELPYGGWVAPNIYYLGYAGVVRFRGVRIGGISGIFKSHDYRKGHFECPPYNQQTIRSAYHVRNIEVFKLKQLKHPMDIFMSHDWPQSIYHYGNKKQLLKMKSFFRQEVESNTLGSPAASELLQHLKPNYWFSAHLHVKFAAFMQHETKSKEELPKATKFLALDKCLPHRDFLQIIDIEHDPTAGDSLEYDAEWIAVLKATNSLINVTQSSWSVPENNGLHAKWDYSATEEAIKEVLEELNHNLKIPCNFTLTTTCYDPSKPQKNMEPVHTINPQTTEFCAQFGLTDINDRIQQVKEEGSVRGEYEEEEEEMDSSGSAEEPSEYNTDNSGLSSINPDEIMLDDEGGDEDLSTCSVDPSPDHPPEFSASFSDIRIMPDSMAVSSDDAMDSTNEELEKSGVNKQVEEKSLNERPLKRVGGSENGNSGIKIKRRNQAIYAAEDEDEAK</sequence>
<organism>
    <name type="scientific">Gallus gallus</name>
    <name type="common">Chicken</name>
    <dbReference type="NCBI Taxonomy" id="9031"/>
    <lineage>
        <taxon>Eukaryota</taxon>
        <taxon>Metazoa</taxon>
        <taxon>Chordata</taxon>
        <taxon>Craniata</taxon>
        <taxon>Vertebrata</taxon>
        <taxon>Euteleostomi</taxon>
        <taxon>Archelosauria</taxon>
        <taxon>Archosauria</taxon>
        <taxon>Dinosauria</taxon>
        <taxon>Saurischia</taxon>
        <taxon>Theropoda</taxon>
        <taxon>Coelurosauria</taxon>
        <taxon>Aves</taxon>
        <taxon>Neognathae</taxon>
        <taxon>Galloanserae</taxon>
        <taxon>Galliformes</taxon>
        <taxon>Phasianidae</taxon>
        <taxon>Phasianinae</taxon>
        <taxon>Gallus</taxon>
    </lineage>
</organism>
<feature type="chain" id="PRO_0000250360" description="Lariat debranching enzyme">
    <location>
        <begin position="1"/>
        <end position="536"/>
    </location>
</feature>
<feature type="region of interest" description="Lariat recognition loop" evidence="1">
    <location>
        <begin position="124"/>
        <end position="154"/>
    </location>
</feature>
<feature type="region of interest" description="Disordered" evidence="4">
    <location>
        <begin position="388"/>
        <end position="536"/>
    </location>
</feature>
<feature type="compositionally biased region" description="Polar residues" evidence="4">
    <location>
        <begin position="414"/>
        <end position="426"/>
    </location>
</feature>
<feature type="compositionally biased region" description="Acidic residues" evidence="4">
    <location>
        <begin position="430"/>
        <end position="441"/>
    </location>
</feature>
<feature type="compositionally biased region" description="Basic and acidic residues" evidence="4">
    <location>
        <begin position="484"/>
        <end position="504"/>
    </location>
</feature>
<feature type="binding site" evidence="1">
    <location>
        <position position="8"/>
    </location>
    <ligand>
        <name>a divalent metal cation</name>
        <dbReference type="ChEBI" id="CHEBI:60240"/>
        <label>1</label>
    </ligand>
</feature>
<feature type="binding site" evidence="1">
    <location>
        <position position="10"/>
    </location>
    <ligand>
        <name>a divalent metal cation</name>
        <dbReference type="ChEBI" id="CHEBI:60240"/>
        <label>1</label>
    </ligand>
</feature>
<feature type="binding site" evidence="1">
    <location>
        <position position="39"/>
    </location>
    <ligand>
        <name>a divalent metal cation</name>
        <dbReference type="ChEBI" id="CHEBI:60240"/>
        <label>2</label>
    </ligand>
</feature>
<feature type="binding site" evidence="1">
    <location>
        <position position="84"/>
    </location>
    <ligand>
        <name>a divalent metal cation</name>
        <dbReference type="ChEBI" id="CHEBI:60240"/>
        <label>2</label>
    </ligand>
</feature>
<feature type="binding site" evidence="1">
    <location>
        <position position="174"/>
    </location>
    <ligand>
        <name>a divalent metal cation</name>
        <dbReference type="ChEBI" id="CHEBI:60240"/>
        <label>2</label>
    </ligand>
</feature>
<feature type="binding site" evidence="1">
    <location>
        <position position="226"/>
    </location>
    <ligand>
        <name>a divalent metal cation</name>
        <dbReference type="ChEBI" id="CHEBI:60240"/>
        <label>2</label>
    </ligand>
</feature>
<feature type="binding site" evidence="1">
    <location>
        <position position="228"/>
    </location>
    <ligand>
        <name>a divalent metal cation</name>
        <dbReference type="ChEBI" id="CHEBI:60240"/>
        <label>1</label>
    </ligand>
</feature>
<proteinExistence type="evidence at transcript level"/>
<protein>
    <recommendedName>
        <fullName>Lariat debranching enzyme</fullName>
        <ecNumber evidence="3">3.1.4.-</ecNumber>
    </recommendedName>
</protein>
<accession>Q5ZLM2</accession>
<gene>
    <name type="primary">DBR1</name>
    <name type="ORF">RCJMB04_5i14</name>
</gene>
<dbReference type="EC" id="3.1.4.-" evidence="3"/>
<dbReference type="EMBL" id="AJ719712">
    <property type="protein sequence ID" value="CAG31371.1"/>
    <property type="molecule type" value="mRNA"/>
</dbReference>
<dbReference type="RefSeq" id="NP_001026737.1">
    <property type="nucleotide sequence ID" value="NM_001031566.3"/>
</dbReference>
<dbReference type="SMR" id="Q5ZLM2"/>
<dbReference type="FunCoup" id="Q5ZLM2">
    <property type="interactions" value="882"/>
</dbReference>
<dbReference type="STRING" id="9031.ENSGALP00000055797"/>
<dbReference type="PaxDb" id="9031-ENSGALP00000001803"/>
<dbReference type="GeneID" id="429118"/>
<dbReference type="KEGG" id="gga:429118"/>
<dbReference type="CTD" id="51163"/>
<dbReference type="VEuPathDB" id="HostDB:geneid_429118"/>
<dbReference type="eggNOG" id="KOG2863">
    <property type="taxonomic scope" value="Eukaryota"/>
</dbReference>
<dbReference type="HOGENOM" id="CLU_005893_0_2_1"/>
<dbReference type="InParanoid" id="Q5ZLM2"/>
<dbReference type="OMA" id="GIDDPLC"/>
<dbReference type="OrthoDB" id="407609at2759"/>
<dbReference type="PhylomeDB" id="Q5ZLM2"/>
<dbReference type="TreeFam" id="TF313221"/>
<dbReference type="PRO" id="PR:Q5ZLM2"/>
<dbReference type="Proteomes" id="UP000000539">
    <property type="component" value="Unassembled WGS sequence"/>
</dbReference>
<dbReference type="GO" id="GO:0005634">
    <property type="term" value="C:nucleus"/>
    <property type="evidence" value="ECO:0000250"/>
    <property type="project" value="UniProtKB"/>
</dbReference>
<dbReference type="GO" id="GO:0046872">
    <property type="term" value="F:metal ion binding"/>
    <property type="evidence" value="ECO:0007669"/>
    <property type="project" value="UniProtKB-KW"/>
</dbReference>
<dbReference type="GO" id="GO:0008419">
    <property type="term" value="F:RNA lariat debranching enzyme activity"/>
    <property type="evidence" value="ECO:0000250"/>
    <property type="project" value="UniProtKB"/>
</dbReference>
<dbReference type="GO" id="GO:0000398">
    <property type="term" value="P:mRNA splicing, via spliceosome"/>
    <property type="evidence" value="ECO:0000318"/>
    <property type="project" value="GO_Central"/>
</dbReference>
<dbReference type="GO" id="GO:0000375">
    <property type="term" value="P:RNA splicing, via transesterification reactions"/>
    <property type="evidence" value="ECO:0000250"/>
    <property type="project" value="UniProtKB"/>
</dbReference>
<dbReference type="CDD" id="cd00844">
    <property type="entry name" value="MPP_Dbr1_N"/>
    <property type="match status" value="1"/>
</dbReference>
<dbReference type="FunFam" id="3.60.21.10:FF:000035">
    <property type="entry name" value="Lariat debranching enzyme"/>
    <property type="match status" value="1"/>
</dbReference>
<dbReference type="Gene3D" id="3.60.21.10">
    <property type="match status" value="1"/>
</dbReference>
<dbReference type="InterPro" id="IPR004843">
    <property type="entry name" value="Calcineurin-like_PHP_ApaH"/>
</dbReference>
<dbReference type="InterPro" id="IPR007708">
    <property type="entry name" value="DBR1_C"/>
</dbReference>
<dbReference type="InterPro" id="IPR041816">
    <property type="entry name" value="Dbr1_N"/>
</dbReference>
<dbReference type="InterPro" id="IPR029052">
    <property type="entry name" value="Metallo-depent_PP-like"/>
</dbReference>
<dbReference type="PANTHER" id="PTHR12849:SF0">
    <property type="entry name" value="LARIAT DEBRANCHING ENZYME"/>
    <property type="match status" value="1"/>
</dbReference>
<dbReference type="PANTHER" id="PTHR12849">
    <property type="entry name" value="RNA LARIAT DEBRANCHING ENZYME"/>
    <property type="match status" value="1"/>
</dbReference>
<dbReference type="Pfam" id="PF05011">
    <property type="entry name" value="DBR1"/>
    <property type="match status" value="1"/>
</dbReference>
<dbReference type="Pfam" id="PF00149">
    <property type="entry name" value="Metallophos"/>
    <property type="match status" value="1"/>
</dbReference>
<dbReference type="SMART" id="SM01124">
    <property type="entry name" value="DBR1"/>
    <property type="match status" value="1"/>
</dbReference>
<dbReference type="SUPFAM" id="SSF56300">
    <property type="entry name" value="Metallo-dependent phosphatases"/>
    <property type="match status" value="1"/>
</dbReference>
<evidence type="ECO:0000250" key="1">
    <source>
        <dbReference type="UniProtKB" id="C4M1P9"/>
    </source>
</evidence>
<evidence type="ECO:0000250" key="2">
    <source>
        <dbReference type="UniProtKB" id="P24309"/>
    </source>
</evidence>
<evidence type="ECO:0000250" key="3">
    <source>
        <dbReference type="UniProtKB" id="Q9UK59"/>
    </source>
</evidence>
<evidence type="ECO:0000256" key="4">
    <source>
        <dbReference type="SAM" id="MobiDB-lite"/>
    </source>
</evidence>
<evidence type="ECO:0000305" key="5"/>
<comment type="function">
    <text evidence="3">Cleaves the 2'-5' phosphodiester linkage at the branch point of excised lariat intron RNA and converts them into linear molecules that can be subsequently degraded, thereby facilitating ribonucleotide turnover. Linked to its role in pre-mRNA processing mechanism, may also participate in retrovirus replication and have an antiviral cell-intrinsic defense function.</text>
</comment>
<comment type="cofactor">
    <cofactor evidence="2">
        <name>Fe(2+)</name>
        <dbReference type="ChEBI" id="CHEBI:29033"/>
    </cofactor>
    <cofactor evidence="2">
        <name>Zn(2+)</name>
        <dbReference type="ChEBI" id="CHEBI:29105"/>
    </cofactor>
    <cofactor evidence="3">
        <name>Mn(2+)</name>
        <dbReference type="ChEBI" id="CHEBI:29035"/>
    </cofactor>
    <text evidence="2">Binds 2 divalent metal cations per subunit.</text>
</comment>
<comment type="activity regulation">
    <text evidence="2 3">Active in presence of diverse metals including Fe(2+), Zn(2+), Mn(2+) (By similarity). Also activated by Ca(2+) (By similarity). Binds two metal cations in two adjacent alpha and beta metal-binding pockets (By similarity).</text>
</comment>
<comment type="subcellular location">
    <subcellularLocation>
        <location evidence="5">Nucleus</location>
    </subcellularLocation>
</comment>
<comment type="similarity">
    <text evidence="5">Belongs to the lariat debranching enzyme family.</text>
</comment>
<name>DBR1_CHICK</name>